<gene>
    <name evidence="1" type="primary">rpmG1</name>
    <name type="ordered locus">SSP1205</name>
</gene>
<evidence type="ECO:0000255" key="1">
    <source>
        <dbReference type="HAMAP-Rule" id="MF_00294"/>
    </source>
</evidence>
<keyword id="KW-1185">Reference proteome</keyword>
<keyword id="KW-0687">Ribonucleoprotein</keyword>
<keyword id="KW-0689">Ribosomal protein</keyword>
<organism>
    <name type="scientific">Staphylococcus saprophyticus subsp. saprophyticus (strain ATCC 15305 / DSM 20229 / NCIMB 8711 / NCTC 7292 / S-41)</name>
    <dbReference type="NCBI Taxonomy" id="342451"/>
    <lineage>
        <taxon>Bacteria</taxon>
        <taxon>Bacillati</taxon>
        <taxon>Bacillota</taxon>
        <taxon>Bacilli</taxon>
        <taxon>Bacillales</taxon>
        <taxon>Staphylococcaceae</taxon>
        <taxon>Staphylococcus</taxon>
    </lineage>
</organism>
<proteinExistence type="inferred from homology"/>
<sequence>MRVNVTLACTECGERNYITTKNKRTNPERIEMKKHCARDNKHTMHRETK</sequence>
<reference key="1">
    <citation type="journal article" date="2005" name="Proc. Natl. Acad. Sci. U.S.A.">
        <title>Whole genome sequence of Staphylococcus saprophyticus reveals the pathogenesis of uncomplicated urinary tract infection.</title>
        <authorList>
            <person name="Kuroda M."/>
            <person name="Yamashita A."/>
            <person name="Hirakawa H."/>
            <person name="Kumano M."/>
            <person name="Morikawa K."/>
            <person name="Higashide M."/>
            <person name="Maruyama A."/>
            <person name="Inose Y."/>
            <person name="Matoba K."/>
            <person name="Toh H."/>
            <person name="Kuhara S."/>
            <person name="Hattori M."/>
            <person name="Ohta T."/>
        </authorList>
    </citation>
    <scope>NUCLEOTIDE SEQUENCE [LARGE SCALE GENOMIC DNA]</scope>
    <source>
        <strain>ATCC 15305 / DSM 20229 / NCIMB 8711 / NCTC 7292 / S-41</strain>
    </source>
</reference>
<protein>
    <recommendedName>
        <fullName evidence="1">Large ribosomal subunit protein bL33A</fullName>
    </recommendedName>
    <alternativeName>
        <fullName evidence="1">50S ribosomal protein L33 1</fullName>
    </alternativeName>
</protein>
<name>RL331_STAS1</name>
<dbReference type="EMBL" id="AP008934">
    <property type="protein sequence ID" value="BAE18350.1"/>
    <property type="molecule type" value="Genomic_DNA"/>
</dbReference>
<dbReference type="SMR" id="Q49XZ4"/>
<dbReference type="KEGG" id="ssp:SSP1205"/>
<dbReference type="eggNOG" id="COG0267">
    <property type="taxonomic scope" value="Bacteria"/>
</dbReference>
<dbReference type="HOGENOM" id="CLU_190949_0_2_9"/>
<dbReference type="OrthoDB" id="197660at2"/>
<dbReference type="Proteomes" id="UP000006371">
    <property type="component" value="Chromosome"/>
</dbReference>
<dbReference type="GO" id="GO:0005737">
    <property type="term" value="C:cytoplasm"/>
    <property type="evidence" value="ECO:0007669"/>
    <property type="project" value="UniProtKB-ARBA"/>
</dbReference>
<dbReference type="GO" id="GO:1990904">
    <property type="term" value="C:ribonucleoprotein complex"/>
    <property type="evidence" value="ECO:0007669"/>
    <property type="project" value="UniProtKB-KW"/>
</dbReference>
<dbReference type="GO" id="GO:0005840">
    <property type="term" value="C:ribosome"/>
    <property type="evidence" value="ECO:0007669"/>
    <property type="project" value="UniProtKB-KW"/>
</dbReference>
<dbReference type="GO" id="GO:0003735">
    <property type="term" value="F:structural constituent of ribosome"/>
    <property type="evidence" value="ECO:0007669"/>
    <property type="project" value="InterPro"/>
</dbReference>
<dbReference type="GO" id="GO:0006412">
    <property type="term" value="P:translation"/>
    <property type="evidence" value="ECO:0007669"/>
    <property type="project" value="UniProtKB-UniRule"/>
</dbReference>
<dbReference type="Gene3D" id="2.20.28.120">
    <property type="entry name" value="Ribosomal protein L33"/>
    <property type="match status" value="1"/>
</dbReference>
<dbReference type="HAMAP" id="MF_00294">
    <property type="entry name" value="Ribosomal_bL33"/>
    <property type="match status" value="1"/>
</dbReference>
<dbReference type="InterPro" id="IPR001705">
    <property type="entry name" value="Ribosomal_bL33"/>
</dbReference>
<dbReference type="InterPro" id="IPR018264">
    <property type="entry name" value="Ribosomal_bL33_CS"/>
</dbReference>
<dbReference type="InterPro" id="IPR038584">
    <property type="entry name" value="Ribosomal_bL33_sf"/>
</dbReference>
<dbReference type="InterPro" id="IPR011332">
    <property type="entry name" value="Ribosomal_zn-bd"/>
</dbReference>
<dbReference type="NCBIfam" id="NF001764">
    <property type="entry name" value="PRK00504.1"/>
    <property type="match status" value="1"/>
</dbReference>
<dbReference type="NCBIfam" id="NF001860">
    <property type="entry name" value="PRK00595.1"/>
    <property type="match status" value="1"/>
</dbReference>
<dbReference type="NCBIfam" id="TIGR01023">
    <property type="entry name" value="rpmG_bact"/>
    <property type="match status" value="1"/>
</dbReference>
<dbReference type="PANTHER" id="PTHR43168">
    <property type="entry name" value="50S RIBOSOMAL PROTEIN L33, CHLOROPLASTIC"/>
    <property type="match status" value="1"/>
</dbReference>
<dbReference type="PANTHER" id="PTHR43168:SF2">
    <property type="entry name" value="LARGE RIBOSOMAL SUBUNIT PROTEIN BL33C"/>
    <property type="match status" value="1"/>
</dbReference>
<dbReference type="Pfam" id="PF00471">
    <property type="entry name" value="Ribosomal_L33"/>
    <property type="match status" value="1"/>
</dbReference>
<dbReference type="SUPFAM" id="SSF57829">
    <property type="entry name" value="Zn-binding ribosomal proteins"/>
    <property type="match status" value="1"/>
</dbReference>
<dbReference type="PROSITE" id="PS00582">
    <property type="entry name" value="RIBOSOMAL_L33"/>
    <property type="match status" value="1"/>
</dbReference>
<accession>Q49XZ4</accession>
<feature type="chain" id="PRO_0000356702" description="Large ribosomal subunit protein bL33A">
    <location>
        <begin position="1"/>
        <end position="49"/>
    </location>
</feature>
<comment type="similarity">
    <text evidence="1">Belongs to the bacterial ribosomal protein bL33 family.</text>
</comment>